<feature type="signal peptide" evidence="1">
    <location>
        <begin position="1"/>
        <end position="23"/>
    </location>
</feature>
<feature type="chain" id="PRO_0000446799" description="U-scoloptoxin(15)-Ssd3b" evidence="3">
    <location>
        <begin position="24"/>
        <end position="76"/>
    </location>
</feature>
<evidence type="ECO:0000269" key="1">
    <source>
    </source>
</evidence>
<evidence type="ECO:0000303" key="2">
    <source>
    </source>
</evidence>
<evidence type="ECO:0000305" key="3"/>
<evidence type="ECO:0000305" key="4">
    <source>
    </source>
</evidence>
<organism>
    <name type="scientific">Scolopendra dehaani</name>
    <name type="common">Thai centipede</name>
    <name type="synonym">Scolopendra subspinipes dehaani</name>
    <dbReference type="NCBI Taxonomy" id="2609776"/>
    <lineage>
        <taxon>Eukaryota</taxon>
        <taxon>Metazoa</taxon>
        <taxon>Ecdysozoa</taxon>
        <taxon>Arthropoda</taxon>
        <taxon>Myriapoda</taxon>
        <taxon>Chilopoda</taxon>
        <taxon>Pleurostigmophora</taxon>
        <taxon>Scolopendromorpha</taxon>
        <taxon>Scolopendridae</taxon>
        <taxon>Scolopendra</taxon>
    </lineage>
</organism>
<keyword id="KW-0903">Direct protein sequencing</keyword>
<keyword id="KW-1015">Disulfide bond</keyword>
<keyword id="KW-0964">Secreted</keyword>
<keyword id="KW-0732">Signal</keyword>
<keyword id="KW-0800">Toxin</keyword>
<dbReference type="EMBL" id="KC145003">
    <property type="status" value="NOT_ANNOTATED_CDS"/>
    <property type="molecule type" value="mRNA"/>
</dbReference>
<dbReference type="SMR" id="P0DPV5"/>
<dbReference type="GO" id="GO:0005576">
    <property type="term" value="C:extracellular region"/>
    <property type="evidence" value="ECO:0007669"/>
    <property type="project" value="UniProtKB-SubCell"/>
</dbReference>
<dbReference type="GO" id="GO:0090729">
    <property type="term" value="F:toxin activity"/>
    <property type="evidence" value="ECO:0007669"/>
    <property type="project" value="UniProtKB-KW"/>
</dbReference>
<sequence>MEKKIIFLCFLVALLTFPEFISSEVIRDSVIHDEEKFANRSYCIKTCATEFTGGDESRIKDVRPRHYKCVCWYYSD</sequence>
<comment type="subcellular location">
    <subcellularLocation>
        <location evidence="1">Secreted</location>
    </subcellularLocation>
</comment>
<comment type="tissue specificity">
    <text evidence="4">Expressed by the venom gland.</text>
</comment>
<comment type="PTM">
    <text evidence="3">Contains 2 disulfide bonds.</text>
</comment>
<comment type="mass spectrometry"/>
<comment type="similarity">
    <text evidence="3">Belongs to the scoloptoxin-15 family.</text>
</comment>
<protein>
    <recommendedName>
        <fullName evidence="3">U-scoloptoxin(15)-Ssd3b</fullName>
        <shortName evidence="3">U-SLPTX(15)-Ssd3a</shortName>
    </recommendedName>
    <alternativeName>
        <fullName evidence="2">Toxin SSD1014</fullName>
    </alternativeName>
</protein>
<proteinExistence type="evidence at protein level"/>
<reference key="1">
    <citation type="journal article" date="2012" name="J. Proteome Res.">
        <title>Venomic and transcriptomic analysis of centipede Scolopendra subspinipes dehaani.</title>
        <authorList>
            <person name="Liu Z.C."/>
            <person name="Zhang R."/>
            <person name="Zhao F."/>
            <person name="Chen Z.M."/>
            <person name="Liu H.W."/>
            <person name="Wang Y.J."/>
            <person name="Jiang P."/>
            <person name="Zhang Y."/>
            <person name="Wu Y."/>
            <person name="Ding J.P."/>
            <person name="Lee W.H."/>
            <person name="Zhang Y."/>
        </authorList>
    </citation>
    <scope>NUCLEOTIDE SEQUENCE [MRNA]</scope>
    <scope>PROTEIN SEQUENCE OF 24-42</scope>
    <scope>SUBCELLULAR LOCATION</scope>
    <scope>MASS SPECTROMETRY</scope>
    <source>
        <tissue>Venom</tissue>
        <tissue>Venom gland</tissue>
    </source>
</reference>
<name>TXF3B_SCODE</name>
<accession>P0DPV5</accession>